<reference key="1">
    <citation type="journal article" date="2004" name="Nature">
        <title>Genome evolution in yeasts.</title>
        <authorList>
            <person name="Dujon B."/>
            <person name="Sherman D."/>
            <person name="Fischer G."/>
            <person name="Durrens P."/>
            <person name="Casaregola S."/>
            <person name="Lafontaine I."/>
            <person name="de Montigny J."/>
            <person name="Marck C."/>
            <person name="Neuveglise C."/>
            <person name="Talla E."/>
            <person name="Goffard N."/>
            <person name="Frangeul L."/>
            <person name="Aigle M."/>
            <person name="Anthouard V."/>
            <person name="Babour A."/>
            <person name="Barbe V."/>
            <person name="Barnay S."/>
            <person name="Blanchin S."/>
            <person name="Beckerich J.-M."/>
            <person name="Beyne E."/>
            <person name="Bleykasten C."/>
            <person name="Boisrame A."/>
            <person name="Boyer J."/>
            <person name="Cattolico L."/>
            <person name="Confanioleri F."/>
            <person name="de Daruvar A."/>
            <person name="Despons L."/>
            <person name="Fabre E."/>
            <person name="Fairhead C."/>
            <person name="Ferry-Dumazet H."/>
            <person name="Groppi A."/>
            <person name="Hantraye F."/>
            <person name="Hennequin C."/>
            <person name="Jauniaux N."/>
            <person name="Joyet P."/>
            <person name="Kachouri R."/>
            <person name="Kerrest A."/>
            <person name="Koszul R."/>
            <person name="Lemaire M."/>
            <person name="Lesur I."/>
            <person name="Ma L."/>
            <person name="Muller H."/>
            <person name="Nicaud J.-M."/>
            <person name="Nikolski M."/>
            <person name="Oztas S."/>
            <person name="Ozier-Kalogeropoulos O."/>
            <person name="Pellenz S."/>
            <person name="Potier S."/>
            <person name="Richard G.-F."/>
            <person name="Straub M.-L."/>
            <person name="Suleau A."/>
            <person name="Swennen D."/>
            <person name="Tekaia F."/>
            <person name="Wesolowski-Louvel M."/>
            <person name="Westhof E."/>
            <person name="Wirth B."/>
            <person name="Zeniou-Meyer M."/>
            <person name="Zivanovic Y."/>
            <person name="Bolotin-Fukuhara M."/>
            <person name="Thierry A."/>
            <person name="Bouchier C."/>
            <person name="Caudron B."/>
            <person name="Scarpelli C."/>
            <person name="Gaillardin C."/>
            <person name="Weissenbach J."/>
            <person name="Wincker P."/>
            <person name="Souciet J.-L."/>
        </authorList>
    </citation>
    <scope>NUCLEOTIDE SEQUENCE [LARGE SCALE GENOMIC DNA]</scope>
    <source>
        <strain>ATCC 8585 / CBS 2359 / DSM 70799 / NBRC 1267 / NRRL Y-1140 / WM37</strain>
    </source>
</reference>
<accession>Q6CU59</accession>
<proteinExistence type="inferred from homology"/>
<protein>
    <recommendedName>
        <fullName evidence="2">Ribosome biogenesis protein YTM1</fullName>
    </recommendedName>
</protein>
<gene>
    <name evidence="2" type="primary">YTM1</name>
    <name type="ordered locus">KLLA0C07425g</name>
</gene>
<evidence type="ECO:0000250" key="1"/>
<evidence type="ECO:0000255" key="2">
    <source>
        <dbReference type="HAMAP-Rule" id="MF_03029"/>
    </source>
</evidence>
<comment type="function">
    <text evidence="2">Component of the NOP7 complex, which is required for maturation of the 25S and 5.8S ribosomal RNAs and formation of the 60S ribosome.</text>
</comment>
<comment type="subunit">
    <text evidence="2">Component of the NOP7 complex, composed of ERB1, NOP7 and YTM1. The complex is held together by ERB1, which interacts with NOP7 via its N-terminal domain and with YTM1 via a high-affinity interaction between the seven-bladed beta-propeller domains of the 2 proteins. The NOP7 complex associates with the 66S pre-ribosome. Interacts (via UBL domain) with MDN1 (via VWFA/MIDAS domain).</text>
</comment>
<comment type="subcellular location">
    <subcellularLocation>
        <location evidence="2">Nucleus</location>
        <location evidence="2">Nucleolus</location>
    </subcellularLocation>
    <subcellularLocation>
        <location evidence="2">Nucleus</location>
        <location evidence="2">Nucleoplasm</location>
    </subcellularLocation>
</comment>
<comment type="similarity">
    <text evidence="2">Belongs to the WD repeat WDR12/YTM1 family.</text>
</comment>
<dbReference type="EMBL" id="CR382123">
    <property type="protein sequence ID" value="CAH01381.1"/>
    <property type="molecule type" value="Genomic_DNA"/>
</dbReference>
<dbReference type="RefSeq" id="XP_452530.1">
    <property type="nucleotide sequence ID" value="XM_452530.1"/>
</dbReference>
<dbReference type="SMR" id="Q6CU59"/>
<dbReference type="FunCoup" id="Q6CU59">
    <property type="interactions" value="997"/>
</dbReference>
<dbReference type="STRING" id="284590.Q6CU59"/>
<dbReference type="PaxDb" id="284590-Q6CU59"/>
<dbReference type="KEGG" id="kla:KLLA0_C07425g"/>
<dbReference type="eggNOG" id="KOG0313">
    <property type="taxonomic scope" value="Eukaryota"/>
</dbReference>
<dbReference type="HOGENOM" id="CLU_000288_57_0_1"/>
<dbReference type="InParanoid" id="Q6CU59"/>
<dbReference type="OMA" id="DHKYVEF"/>
<dbReference type="Proteomes" id="UP000000598">
    <property type="component" value="Chromosome C"/>
</dbReference>
<dbReference type="GO" id="GO:0005654">
    <property type="term" value="C:nucleoplasm"/>
    <property type="evidence" value="ECO:0007669"/>
    <property type="project" value="UniProtKB-SubCell"/>
</dbReference>
<dbReference type="GO" id="GO:0070545">
    <property type="term" value="C:PeBoW complex"/>
    <property type="evidence" value="ECO:0007669"/>
    <property type="project" value="TreeGrafter"/>
</dbReference>
<dbReference type="GO" id="GO:0030687">
    <property type="term" value="C:preribosome, large subunit precursor"/>
    <property type="evidence" value="ECO:0007669"/>
    <property type="project" value="UniProtKB-UniRule"/>
</dbReference>
<dbReference type="GO" id="GO:0043021">
    <property type="term" value="F:ribonucleoprotein complex binding"/>
    <property type="evidence" value="ECO:0007669"/>
    <property type="project" value="UniProtKB-UniRule"/>
</dbReference>
<dbReference type="GO" id="GO:0000466">
    <property type="term" value="P:maturation of 5.8S rRNA from tricistronic rRNA transcript (SSU-rRNA, 5.8S rRNA, LSU-rRNA)"/>
    <property type="evidence" value="ECO:0007669"/>
    <property type="project" value="UniProtKB-UniRule"/>
</dbReference>
<dbReference type="GO" id="GO:0000463">
    <property type="term" value="P:maturation of LSU-rRNA from tricistronic rRNA transcript (SSU-rRNA, 5.8S rRNA, LSU-rRNA)"/>
    <property type="evidence" value="ECO:0007669"/>
    <property type="project" value="UniProtKB-UniRule"/>
</dbReference>
<dbReference type="CDD" id="cd00200">
    <property type="entry name" value="WD40"/>
    <property type="match status" value="1"/>
</dbReference>
<dbReference type="FunFam" id="2.130.10.10:FF:000706">
    <property type="entry name" value="Ribosome biogenesis protein YTM1"/>
    <property type="match status" value="1"/>
</dbReference>
<dbReference type="Gene3D" id="2.130.10.10">
    <property type="entry name" value="YVTN repeat-like/Quinoprotein amine dehydrogenase"/>
    <property type="match status" value="1"/>
</dbReference>
<dbReference type="HAMAP" id="MF_03029">
    <property type="entry name" value="WDR12"/>
    <property type="match status" value="1"/>
</dbReference>
<dbReference type="InterPro" id="IPR020472">
    <property type="entry name" value="G-protein_beta_WD-40_rep"/>
</dbReference>
<dbReference type="InterPro" id="IPR012972">
    <property type="entry name" value="NLE"/>
</dbReference>
<dbReference type="InterPro" id="IPR015943">
    <property type="entry name" value="WD40/YVTN_repeat-like_dom_sf"/>
</dbReference>
<dbReference type="InterPro" id="IPR019775">
    <property type="entry name" value="WD40_repeat_CS"/>
</dbReference>
<dbReference type="InterPro" id="IPR036322">
    <property type="entry name" value="WD40_repeat_dom_sf"/>
</dbReference>
<dbReference type="InterPro" id="IPR001680">
    <property type="entry name" value="WD40_rpt"/>
</dbReference>
<dbReference type="InterPro" id="IPR028599">
    <property type="entry name" value="WDR12/Ytm1"/>
</dbReference>
<dbReference type="PANTHER" id="PTHR19855:SF11">
    <property type="entry name" value="RIBOSOME BIOGENESIS PROTEIN WDR12"/>
    <property type="match status" value="1"/>
</dbReference>
<dbReference type="PANTHER" id="PTHR19855">
    <property type="entry name" value="WD40 REPEAT PROTEIN 12, 37"/>
    <property type="match status" value="1"/>
</dbReference>
<dbReference type="Pfam" id="PF08154">
    <property type="entry name" value="NLE"/>
    <property type="match status" value="1"/>
</dbReference>
<dbReference type="Pfam" id="PF00400">
    <property type="entry name" value="WD40"/>
    <property type="match status" value="5"/>
</dbReference>
<dbReference type="PRINTS" id="PR00320">
    <property type="entry name" value="GPROTEINBRPT"/>
</dbReference>
<dbReference type="SMART" id="SM00320">
    <property type="entry name" value="WD40"/>
    <property type="match status" value="7"/>
</dbReference>
<dbReference type="SUPFAM" id="SSF50978">
    <property type="entry name" value="WD40 repeat-like"/>
    <property type="match status" value="1"/>
</dbReference>
<dbReference type="PROSITE" id="PS00678">
    <property type="entry name" value="WD_REPEATS_1"/>
    <property type="match status" value="1"/>
</dbReference>
<dbReference type="PROSITE" id="PS50082">
    <property type="entry name" value="WD_REPEATS_2"/>
    <property type="match status" value="4"/>
</dbReference>
<dbReference type="PROSITE" id="PS50294">
    <property type="entry name" value="WD_REPEATS_REGION"/>
    <property type="match status" value="1"/>
</dbReference>
<sequence>MSTDKTQVKLRFFTREEDETLHVNDAPIYAPVSLKRYGLSEIVNHLLELPKSMPFDFLIDGELLRTSLQDYLIKKGLSSETFLNVEYTRAVLPPSYLSSFDNEDWVSSLDVGSNYIYSGSYDGIVRTYNLSGKVEKQYSGHSGPIRAVHYISSTRLVSAGNDRTLRLWKTKNDDLKSIDEEEIEDGKTLAILEGHKAPVVSIDVSKDRILSASCDNTVSLWSTNYKEMTVIDPMEDLGGNVSTAAKKRRKLTLKDGSIRRRAPLALFESHSAPVEAVIFDKSDDTVGYSVSQDHTIKTWDLITAKCVDTKTTSYSLLSVAQLPKLNLLACGSSARHITLHDPRVNSSSKITQQQLVGHKNFVVALDTCPENEYMICSASHDGTVKVWDVRSNTAMYTITREDKNVVKGVNDKVFAVKWAKGVGIISGGQDKKIQINKGDNIFSN</sequence>
<organism>
    <name type="scientific">Kluyveromyces lactis (strain ATCC 8585 / CBS 2359 / DSM 70799 / NBRC 1267 / NRRL Y-1140 / WM37)</name>
    <name type="common">Yeast</name>
    <name type="synonym">Candida sphaerica</name>
    <dbReference type="NCBI Taxonomy" id="284590"/>
    <lineage>
        <taxon>Eukaryota</taxon>
        <taxon>Fungi</taxon>
        <taxon>Dikarya</taxon>
        <taxon>Ascomycota</taxon>
        <taxon>Saccharomycotina</taxon>
        <taxon>Saccharomycetes</taxon>
        <taxon>Saccharomycetales</taxon>
        <taxon>Saccharomycetaceae</taxon>
        <taxon>Kluyveromyces</taxon>
    </lineage>
</organism>
<keyword id="KW-0539">Nucleus</keyword>
<keyword id="KW-1185">Reference proteome</keyword>
<keyword id="KW-0677">Repeat</keyword>
<keyword id="KW-0690">Ribosome biogenesis</keyword>
<keyword id="KW-0698">rRNA processing</keyword>
<keyword id="KW-0853">WD repeat</keyword>
<name>YTM1_KLULA</name>
<feature type="chain" id="PRO_0000369589" description="Ribosome biogenesis protein YTM1">
    <location>
        <begin position="1"/>
        <end position="444"/>
    </location>
</feature>
<feature type="repeat" description="WD 1">
    <location>
        <begin position="99"/>
        <end position="138"/>
    </location>
</feature>
<feature type="repeat" description="WD 2">
    <location>
        <begin position="140"/>
        <end position="178"/>
    </location>
</feature>
<feature type="repeat" description="WD 3">
    <location>
        <begin position="194"/>
        <end position="231"/>
    </location>
</feature>
<feature type="repeat" description="WD 4">
    <location>
        <begin position="269"/>
        <end position="309"/>
    </location>
</feature>
<feature type="repeat" description="WD 5">
    <location>
        <begin position="311"/>
        <end position="350"/>
    </location>
</feature>
<feature type="repeat" description="WD 6">
    <location>
        <begin position="357"/>
        <end position="397"/>
    </location>
</feature>
<feature type="repeat" description="WD 7">
    <location>
        <begin position="408"/>
        <end position="444"/>
    </location>
</feature>
<feature type="region of interest" description="Ubiquitin-like (UBL) domain" evidence="2">
    <location>
        <begin position="8"/>
        <end position="89"/>
    </location>
</feature>
<feature type="region of interest" description="Sufficient for interaction with ERB1 and association with 66S pre-ribosomes" evidence="1">
    <location>
        <begin position="99"/>
        <end position="444"/>
    </location>
</feature>